<feature type="chain" id="PRO_1000010568" description="Peptidyl-tRNA hydrolase">
    <location>
        <begin position="1"/>
        <end position="250"/>
    </location>
</feature>
<feature type="region of interest" description="Disordered" evidence="2">
    <location>
        <begin position="192"/>
        <end position="250"/>
    </location>
</feature>
<feature type="compositionally biased region" description="Polar residues" evidence="2">
    <location>
        <begin position="219"/>
        <end position="229"/>
    </location>
</feature>
<feature type="compositionally biased region" description="Basic and acidic residues" evidence="2">
    <location>
        <begin position="241"/>
        <end position="250"/>
    </location>
</feature>
<feature type="active site" description="Proton acceptor" evidence="1">
    <location>
        <position position="19"/>
    </location>
</feature>
<feature type="binding site" evidence="1">
    <location>
        <position position="14"/>
    </location>
    <ligand>
        <name>tRNA</name>
        <dbReference type="ChEBI" id="CHEBI:17843"/>
    </ligand>
</feature>
<feature type="binding site" evidence="1">
    <location>
        <position position="64"/>
    </location>
    <ligand>
        <name>tRNA</name>
        <dbReference type="ChEBI" id="CHEBI:17843"/>
    </ligand>
</feature>
<feature type="binding site" evidence="1">
    <location>
        <position position="66"/>
    </location>
    <ligand>
        <name>tRNA</name>
        <dbReference type="ChEBI" id="CHEBI:17843"/>
    </ligand>
</feature>
<feature type="binding site" evidence="1">
    <location>
        <position position="112"/>
    </location>
    <ligand>
        <name>tRNA</name>
        <dbReference type="ChEBI" id="CHEBI:17843"/>
    </ligand>
</feature>
<feature type="site" description="Discriminates between blocked and unblocked aminoacyl-tRNA" evidence="1">
    <location>
        <position position="9"/>
    </location>
</feature>
<feature type="site" description="Stabilizes the basic form of H active site to accept a proton" evidence="1">
    <location>
        <position position="91"/>
    </location>
</feature>
<sequence>MLLIAGLGNPGPQYAHNRHNIGFMAADEIFRRHRFSNWQKKFQAEIADGVIDGEKVLLVKPQTFMNLSGQSIGEAMRFYKLTPADLVVIYDELDLVPGKLRIKTGGGSGGHNGIKSIDAHMQSFPGGQNYRRMRLGIGHPGAKELVHNYVLGDFAKADNEWLDTLMGAVADNVAMLARREDNSFMNRIALAMGDGNQRPGGVKTDPAQLEKAPPKAQSHIRQARQNQKKPNIPESGPMAEMLKKLLGKKD</sequence>
<organism>
    <name type="scientific">Brucella ovis (strain ATCC 25840 / 63/290 / NCTC 10512)</name>
    <dbReference type="NCBI Taxonomy" id="444178"/>
    <lineage>
        <taxon>Bacteria</taxon>
        <taxon>Pseudomonadati</taxon>
        <taxon>Pseudomonadota</taxon>
        <taxon>Alphaproteobacteria</taxon>
        <taxon>Hyphomicrobiales</taxon>
        <taxon>Brucellaceae</taxon>
        <taxon>Brucella/Ochrobactrum group</taxon>
        <taxon>Brucella</taxon>
    </lineage>
</organism>
<evidence type="ECO:0000255" key="1">
    <source>
        <dbReference type="HAMAP-Rule" id="MF_00083"/>
    </source>
</evidence>
<evidence type="ECO:0000256" key="2">
    <source>
        <dbReference type="SAM" id="MobiDB-lite"/>
    </source>
</evidence>
<dbReference type="EC" id="3.1.1.29" evidence="1"/>
<dbReference type="EMBL" id="CP000708">
    <property type="protein sequence ID" value="ABQ60138.1"/>
    <property type="molecule type" value="Genomic_DNA"/>
</dbReference>
<dbReference type="RefSeq" id="WP_002967832.1">
    <property type="nucleotide sequence ID" value="NC_009505.1"/>
</dbReference>
<dbReference type="SMR" id="A5VRR6"/>
<dbReference type="GeneID" id="97533278"/>
<dbReference type="KEGG" id="bov:BOV_1485"/>
<dbReference type="HOGENOM" id="CLU_062456_1_1_5"/>
<dbReference type="PhylomeDB" id="A5VRR6"/>
<dbReference type="PRO" id="PR:A5VRR6"/>
<dbReference type="Proteomes" id="UP000006383">
    <property type="component" value="Chromosome I"/>
</dbReference>
<dbReference type="GO" id="GO:0005737">
    <property type="term" value="C:cytoplasm"/>
    <property type="evidence" value="ECO:0007669"/>
    <property type="project" value="UniProtKB-SubCell"/>
</dbReference>
<dbReference type="GO" id="GO:0004045">
    <property type="term" value="F:peptidyl-tRNA hydrolase activity"/>
    <property type="evidence" value="ECO:0007669"/>
    <property type="project" value="UniProtKB-UniRule"/>
</dbReference>
<dbReference type="GO" id="GO:0000049">
    <property type="term" value="F:tRNA binding"/>
    <property type="evidence" value="ECO:0007669"/>
    <property type="project" value="UniProtKB-UniRule"/>
</dbReference>
<dbReference type="GO" id="GO:0006515">
    <property type="term" value="P:protein quality control for misfolded or incompletely synthesized proteins"/>
    <property type="evidence" value="ECO:0007669"/>
    <property type="project" value="UniProtKB-UniRule"/>
</dbReference>
<dbReference type="GO" id="GO:0072344">
    <property type="term" value="P:rescue of stalled ribosome"/>
    <property type="evidence" value="ECO:0007669"/>
    <property type="project" value="UniProtKB-UniRule"/>
</dbReference>
<dbReference type="CDD" id="cd00462">
    <property type="entry name" value="PTH"/>
    <property type="match status" value="1"/>
</dbReference>
<dbReference type="FunFam" id="3.40.50.1470:FF:000001">
    <property type="entry name" value="Peptidyl-tRNA hydrolase"/>
    <property type="match status" value="1"/>
</dbReference>
<dbReference type="Gene3D" id="3.40.50.1470">
    <property type="entry name" value="Peptidyl-tRNA hydrolase"/>
    <property type="match status" value="1"/>
</dbReference>
<dbReference type="HAMAP" id="MF_00083">
    <property type="entry name" value="Pept_tRNA_hydro_bact"/>
    <property type="match status" value="1"/>
</dbReference>
<dbReference type="InterPro" id="IPR001328">
    <property type="entry name" value="Pept_tRNA_hydro"/>
</dbReference>
<dbReference type="InterPro" id="IPR018171">
    <property type="entry name" value="Pept_tRNA_hydro_CS"/>
</dbReference>
<dbReference type="InterPro" id="IPR036416">
    <property type="entry name" value="Pept_tRNA_hydro_sf"/>
</dbReference>
<dbReference type="NCBIfam" id="TIGR00447">
    <property type="entry name" value="pth"/>
    <property type="match status" value="1"/>
</dbReference>
<dbReference type="PANTHER" id="PTHR17224">
    <property type="entry name" value="PEPTIDYL-TRNA HYDROLASE"/>
    <property type="match status" value="1"/>
</dbReference>
<dbReference type="PANTHER" id="PTHR17224:SF1">
    <property type="entry name" value="PEPTIDYL-TRNA HYDROLASE"/>
    <property type="match status" value="1"/>
</dbReference>
<dbReference type="Pfam" id="PF01195">
    <property type="entry name" value="Pept_tRNA_hydro"/>
    <property type="match status" value="1"/>
</dbReference>
<dbReference type="SUPFAM" id="SSF53178">
    <property type="entry name" value="Peptidyl-tRNA hydrolase-like"/>
    <property type="match status" value="1"/>
</dbReference>
<dbReference type="PROSITE" id="PS01195">
    <property type="entry name" value="PEPT_TRNA_HYDROL_1"/>
    <property type="match status" value="1"/>
</dbReference>
<dbReference type="PROSITE" id="PS01196">
    <property type="entry name" value="PEPT_TRNA_HYDROL_2"/>
    <property type="match status" value="1"/>
</dbReference>
<accession>A5VRR6</accession>
<gene>
    <name evidence="1" type="primary">pth</name>
    <name type="ordered locus">BOV_1485</name>
</gene>
<keyword id="KW-0963">Cytoplasm</keyword>
<keyword id="KW-0378">Hydrolase</keyword>
<keyword id="KW-0694">RNA-binding</keyword>
<keyword id="KW-0820">tRNA-binding</keyword>
<name>PTH_BRUO2</name>
<comment type="function">
    <text evidence="1">Hydrolyzes ribosome-free peptidyl-tRNAs (with 1 or more amino acids incorporated), which drop off the ribosome during protein synthesis, or as a result of ribosome stalling.</text>
</comment>
<comment type="function">
    <text evidence="1">Catalyzes the release of premature peptidyl moieties from peptidyl-tRNA molecules trapped in stalled 50S ribosomal subunits, and thus maintains levels of free tRNAs and 50S ribosomes.</text>
</comment>
<comment type="catalytic activity">
    <reaction evidence="1">
        <text>an N-acyl-L-alpha-aminoacyl-tRNA + H2O = an N-acyl-L-amino acid + a tRNA + H(+)</text>
        <dbReference type="Rhea" id="RHEA:54448"/>
        <dbReference type="Rhea" id="RHEA-COMP:10123"/>
        <dbReference type="Rhea" id="RHEA-COMP:13883"/>
        <dbReference type="ChEBI" id="CHEBI:15377"/>
        <dbReference type="ChEBI" id="CHEBI:15378"/>
        <dbReference type="ChEBI" id="CHEBI:59874"/>
        <dbReference type="ChEBI" id="CHEBI:78442"/>
        <dbReference type="ChEBI" id="CHEBI:138191"/>
        <dbReference type="EC" id="3.1.1.29"/>
    </reaction>
</comment>
<comment type="subunit">
    <text evidence="1">Monomer.</text>
</comment>
<comment type="subcellular location">
    <subcellularLocation>
        <location evidence="1">Cytoplasm</location>
    </subcellularLocation>
</comment>
<comment type="similarity">
    <text evidence="1">Belongs to the PTH family.</text>
</comment>
<protein>
    <recommendedName>
        <fullName evidence="1">Peptidyl-tRNA hydrolase</fullName>
        <shortName evidence="1">Pth</shortName>
        <ecNumber evidence="1">3.1.1.29</ecNumber>
    </recommendedName>
</protein>
<reference key="1">
    <citation type="journal article" date="2009" name="PLoS ONE">
        <title>Genome degradation in Brucella ovis corresponds with narrowing of its host range and tissue tropism.</title>
        <authorList>
            <person name="Tsolis R.M."/>
            <person name="Seshadri R."/>
            <person name="Santos R.L."/>
            <person name="Sangari F.J."/>
            <person name="Lobo J.M."/>
            <person name="de Jong M.F."/>
            <person name="Ren Q."/>
            <person name="Myers G."/>
            <person name="Brinkac L.M."/>
            <person name="Nelson W.C."/>
            <person name="Deboy R.T."/>
            <person name="Angiuoli S."/>
            <person name="Khouri H."/>
            <person name="Dimitrov G."/>
            <person name="Robinson J.R."/>
            <person name="Mulligan S."/>
            <person name="Walker R.L."/>
            <person name="Elzer P.E."/>
            <person name="Hassan K.A."/>
            <person name="Paulsen I.T."/>
        </authorList>
    </citation>
    <scope>NUCLEOTIDE SEQUENCE [LARGE SCALE GENOMIC DNA]</scope>
    <source>
        <strain>ATCC 25840 / 63/290 / NCTC 10512</strain>
    </source>
</reference>
<proteinExistence type="inferred from homology"/>